<dbReference type="EC" id="2.3.2.27" evidence="1"/>
<dbReference type="EMBL" id="AF302084">
    <property type="protein sequence ID" value="AAG30426.1"/>
    <property type="molecule type" value="mRNA"/>
</dbReference>
<dbReference type="EMBL" id="AF277170">
    <property type="protein sequence ID" value="AAG27595.1"/>
    <property type="molecule type" value="Genomic_DNA"/>
</dbReference>
<dbReference type="EMBL" id="AF277164">
    <property type="protein sequence ID" value="AAG27595.1"/>
    <property type="status" value="JOINED"/>
    <property type="molecule type" value="Genomic_DNA"/>
</dbReference>
<dbReference type="EMBL" id="AF277165">
    <property type="protein sequence ID" value="AAG27595.1"/>
    <property type="status" value="JOINED"/>
    <property type="molecule type" value="Genomic_DNA"/>
</dbReference>
<dbReference type="EMBL" id="AF277166">
    <property type="protein sequence ID" value="AAG27595.1"/>
    <property type="status" value="JOINED"/>
    <property type="molecule type" value="Genomic_DNA"/>
</dbReference>
<dbReference type="EMBL" id="AF277167">
    <property type="protein sequence ID" value="AAG27595.1"/>
    <property type="status" value="JOINED"/>
    <property type="molecule type" value="Genomic_DNA"/>
</dbReference>
<dbReference type="EMBL" id="AF277168">
    <property type="protein sequence ID" value="AAG27595.1"/>
    <property type="status" value="JOINED"/>
    <property type="molecule type" value="Genomic_DNA"/>
</dbReference>
<dbReference type="EMBL" id="AF277169">
    <property type="protein sequence ID" value="AAG27595.1"/>
    <property type="status" value="JOINED"/>
    <property type="molecule type" value="Genomic_DNA"/>
</dbReference>
<dbReference type="EMBL" id="AF161555">
    <property type="protein sequence ID" value="AAF29042.2"/>
    <property type="molecule type" value="mRNA"/>
</dbReference>
<dbReference type="EMBL" id="AK091318">
    <property type="protein sequence ID" value="BAG52337.1"/>
    <property type="molecule type" value="mRNA"/>
</dbReference>
<dbReference type="EMBL" id="AK298463">
    <property type="protein sequence ID" value="BAG60676.1"/>
    <property type="molecule type" value="mRNA"/>
</dbReference>
<dbReference type="EMBL" id="AC018500">
    <property type="status" value="NOT_ANNOTATED_CDS"/>
    <property type="molecule type" value="Genomic_DNA"/>
</dbReference>
<dbReference type="EMBL" id="CH471055">
    <property type="protein sequence ID" value="EAW64132.1"/>
    <property type="molecule type" value="Genomic_DNA"/>
</dbReference>
<dbReference type="EMBL" id="CH471055">
    <property type="protein sequence ID" value="EAW64133.1"/>
    <property type="molecule type" value="Genomic_DNA"/>
</dbReference>
<dbReference type="EMBL" id="BC001799">
    <property type="protein sequence ID" value="AAH01799.2"/>
    <property type="molecule type" value="mRNA"/>
</dbReference>
<dbReference type="EMBL" id="BC015715">
    <property type="protein sequence ID" value="AAH15715.1"/>
    <property type="molecule type" value="mRNA"/>
</dbReference>
<dbReference type="EMBL" id="AL834512">
    <property type="protein sequence ID" value="CAD39168.1"/>
    <property type="molecule type" value="mRNA"/>
</dbReference>
<dbReference type="CCDS" id="CCDS33702.1">
    <molecule id="Q9H000-1"/>
</dbReference>
<dbReference type="CCDS" id="CCDS63545.1">
    <molecule id="Q9H000-2"/>
</dbReference>
<dbReference type="RefSeq" id="NP_001258636.1">
    <molecule id="Q9H000-2"/>
    <property type="nucleotide sequence ID" value="NM_001271707.2"/>
</dbReference>
<dbReference type="RefSeq" id="NP_054879.3">
    <molecule id="Q9H000-1"/>
    <property type="nucleotide sequence ID" value="NM_014160.4"/>
</dbReference>
<dbReference type="BioGRID" id="117142">
    <property type="interactions" value="389"/>
</dbReference>
<dbReference type="FunCoup" id="Q9H000">
    <property type="interactions" value="3566"/>
</dbReference>
<dbReference type="IntAct" id="Q9H000">
    <property type="interactions" value="57"/>
</dbReference>
<dbReference type="MINT" id="Q9H000"/>
<dbReference type="STRING" id="9606.ENSP00000170447"/>
<dbReference type="GlyGen" id="Q9H000">
    <property type="glycosylation" value="2 sites, 1 N-linked glycan (1 site), 1 O-linked glycan (1 site)"/>
</dbReference>
<dbReference type="iPTMnet" id="Q9H000"/>
<dbReference type="PhosphoSitePlus" id="Q9H000"/>
<dbReference type="BioMuta" id="MKRN2"/>
<dbReference type="DMDM" id="45645205"/>
<dbReference type="jPOST" id="Q9H000"/>
<dbReference type="MassIVE" id="Q9H000"/>
<dbReference type="PaxDb" id="9606-ENSP00000170447"/>
<dbReference type="PeptideAtlas" id="Q9H000"/>
<dbReference type="ProteomicsDB" id="4805"/>
<dbReference type="ProteomicsDB" id="80191">
    <molecule id="Q9H000-1"/>
</dbReference>
<dbReference type="Pumba" id="Q9H000"/>
<dbReference type="Antibodypedia" id="26240">
    <property type="antibodies" value="297 antibodies from 27 providers"/>
</dbReference>
<dbReference type="DNASU" id="23609"/>
<dbReference type="Ensembl" id="ENST00000170447.12">
    <molecule id="Q9H000-1"/>
    <property type="protein sequence ID" value="ENSP00000170447.7"/>
    <property type="gene ID" value="ENSG00000075975.17"/>
</dbReference>
<dbReference type="Ensembl" id="ENST00000411987.5">
    <molecule id="Q9H000-2"/>
    <property type="protein sequence ID" value="ENSP00000396340.1"/>
    <property type="gene ID" value="ENSG00000075975.17"/>
</dbReference>
<dbReference type="Ensembl" id="ENST00000677816.1">
    <molecule id="Q9H000-1"/>
    <property type="protein sequence ID" value="ENSP00000502893.1"/>
    <property type="gene ID" value="ENSG00000075975.17"/>
</dbReference>
<dbReference type="GeneID" id="23609"/>
<dbReference type="KEGG" id="hsa:23609"/>
<dbReference type="MANE-Select" id="ENST00000170447.12">
    <property type="protein sequence ID" value="ENSP00000170447.7"/>
    <property type="RefSeq nucleotide sequence ID" value="NM_014160.5"/>
    <property type="RefSeq protein sequence ID" value="NP_054879.3"/>
</dbReference>
<dbReference type="UCSC" id="uc003bxd.5">
    <molecule id="Q9H000-1"/>
    <property type="organism name" value="human"/>
</dbReference>
<dbReference type="AGR" id="HGNC:7113"/>
<dbReference type="CTD" id="23609"/>
<dbReference type="DisGeNET" id="23609"/>
<dbReference type="GeneCards" id="MKRN2"/>
<dbReference type="HGNC" id="HGNC:7113">
    <property type="gene designation" value="MKRN2"/>
</dbReference>
<dbReference type="HPA" id="ENSG00000075975">
    <property type="expression patterns" value="Low tissue specificity"/>
</dbReference>
<dbReference type="MIM" id="608426">
    <property type="type" value="gene"/>
</dbReference>
<dbReference type="neXtProt" id="NX_Q9H000"/>
<dbReference type="OpenTargets" id="ENSG00000075975"/>
<dbReference type="PharmGKB" id="PA30832"/>
<dbReference type="VEuPathDB" id="HostDB:ENSG00000075975"/>
<dbReference type="eggNOG" id="KOG1039">
    <property type="taxonomic scope" value="Eukaryota"/>
</dbReference>
<dbReference type="GeneTree" id="ENSGT00950000183077"/>
<dbReference type="HOGENOM" id="CLU_040815_0_1_1"/>
<dbReference type="InParanoid" id="Q9H000"/>
<dbReference type="OMA" id="EKVCMAT"/>
<dbReference type="OrthoDB" id="411372at2759"/>
<dbReference type="PAN-GO" id="Q9H000">
    <property type="GO annotations" value="2 GO annotations based on evolutionary models"/>
</dbReference>
<dbReference type="PhylomeDB" id="Q9H000"/>
<dbReference type="TreeFam" id="TF315108"/>
<dbReference type="PathwayCommons" id="Q9H000"/>
<dbReference type="SignaLink" id="Q9H000"/>
<dbReference type="SIGNOR" id="Q9H000"/>
<dbReference type="UniPathway" id="UPA00143"/>
<dbReference type="BioGRID-ORCS" id="23609">
    <property type="hits" value="11 hits in 1190 CRISPR screens"/>
</dbReference>
<dbReference type="CD-CODE" id="232F8A39">
    <property type="entry name" value="P-body"/>
</dbReference>
<dbReference type="CD-CODE" id="DEE660B4">
    <property type="entry name" value="Stress granule"/>
</dbReference>
<dbReference type="ChiTaRS" id="MKRN2">
    <property type="organism name" value="human"/>
</dbReference>
<dbReference type="GenomeRNAi" id="23609"/>
<dbReference type="Pharos" id="Q9H000">
    <property type="development level" value="Tbio"/>
</dbReference>
<dbReference type="PRO" id="PR:Q9H000"/>
<dbReference type="Proteomes" id="UP000005640">
    <property type="component" value="Chromosome 3"/>
</dbReference>
<dbReference type="RNAct" id="Q9H000">
    <property type="molecule type" value="protein"/>
</dbReference>
<dbReference type="Bgee" id="ENSG00000075975">
    <property type="expression patterns" value="Expressed in secondary oocyte and 189 other cell types or tissues"/>
</dbReference>
<dbReference type="ExpressionAtlas" id="Q9H000">
    <property type="expression patterns" value="baseline and differential"/>
</dbReference>
<dbReference type="GO" id="GO:0005737">
    <property type="term" value="C:cytoplasm"/>
    <property type="evidence" value="ECO:0000250"/>
    <property type="project" value="UniProtKB"/>
</dbReference>
<dbReference type="GO" id="GO:0005634">
    <property type="term" value="C:nucleus"/>
    <property type="evidence" value="ECO:0000250"/>
    <property type="project" value="UniProtKB"/>
</dbReference>
<dbReference type="GO" id="GO:0003723">
    <property type="term" value="F:RNA binding"/>
    <property type="evidence" value="ECO:0007005"/>
    <property type="project" value="UniProtKB"/>
</dbReference>
<dbReference type="GO" id="GO:0061630">
    <property type="term" value="F:ubiquitin protein ligase activity"/>
    <property type="evidence" value="ECO:0000250"/>
    <property type="project" value="UniProtKB"/>
</dbReference>
<dbReference type="GO" id="GO:0008270">
    <property type="term" value="F:zinc ion binding"/>
    <property type="evidence" value="ECO:0007669"/>
    <property type="project" value="UniProtKB-KW"/>
</dbReference>
<dbReference type="GO" id="GO:0030154">
    <property type="term" value="P:cell differentiation"/>
    <property type="evidence" value="ECO:0007669"/>
    <property type="project" value="UniProtKB-KW"/>
</dbReference>
<dbReference type="GO" id="GO:0006351">
    <property type="term" value="P:DNA-templated transcription"/>
    <property type="evidence" value="ECO:0000250"/>
    <property type="project" value="UniProtKB"/>
</dbReference>
<dbReference type="GO" id="GO:0002862">
    <property type="term" value="P:negative regulation of inflammatory response to antigenic stimulus"/>
    <property type="evidence" value="ECO:0000250"/>
    <property type="project" value="UniProtKB"/>
</dbReference>
<dbReference type="GO" id="GO:1901223">
    <property type="term" value="P:negative regulation of non-canonical NF-kappaB signal transduction"/>
    <property type="evidence" value="ECO:0000250"/>
    <property type="project" value="UniProtKB"/>
</dbReference>
<dbReference type="GO" id="GO:0043491">
    <property type="term" value="P:phosphatidylinositol 3-kinase/protein kinase B signal transduction"/>
    <property type="evidence" value="ECO:0000250"/>
    <property type="project" value="UniProtKB"/>
</dbReference>
<dbReference type="GO" id="GO:0045944">
    <property type="term" value="P:positive regulation of transcription by RNA polymerase II"/>
    <property type="evidence" value="ECO:0000250"/>
    <property type="project" value="UniProtKB"/>
</dbReference>
<dbReference type="GO" id="GO:0000209">
    <property type="term" value="P:protein polyubiquitination"/>
    <property type="evidence" value="ECO:0007669"/>
    <property type="project" value="InterPro"/>
</dbReference>
<dbReference type="GO" id="GO:0016567">
    <property type="term" value="P:protein ubiquitination"/>
    <property type="evidence" value="ECO:0000318"/>
    <property type="project" value="GO_Central"/>
</dbReference>
<dbReference type="GO" id="GO:0007283">
    <property type="term" value="P:spermatogenesis"/>
    <property type="evidence" value="ECO:0007669"/>
    <property type="project" value="UniProtKB-KW"/>
</dbReference>
<dbReference type="GO" id="GO:0006511">
    <property type="term" value="P:ubiquitin-dependent protein catabolic process"/>
    <property type="evidence" value="ECO:0000250"/>
    <property type="project" value="UniProtKB"/>
</dbReference>
<dbReference type="CDD" id="cd16731">
    <property type="entry name" value="RING-HC_MKRN2"/>
    <property type="match status" value="1"/>
</dbReference>
<dbReference type="FunFam" id="3.30.40.10:FF:000117">
    <property type="entry name" value="Probable E3 ubiquitin-protein ligase makorin-1"/>
    <property type="match status" value="1"/>
</dbReference>
<dbReference type="FunFam" id="4.10.1000.10:FF:000044">
    <property type="entry name" value="Probable E3 ubiquitin-protein ligase makorin-2"/>
    <property type="match status" value="1"/>
</dbReference>
<dbReference type="FunFam" id="2.30.30.1190:FF:000002">
    <property type="entry name" value="probable E3 ubiquitin-protein ligase makorin-2 isoform X2"/>
    <property type="match status" value="1"/>
</dbReference>
<dbReference type="Gene3D" id="2.30.30.1190">
    <property type="match status" value="1"/>
</dbReference>
<dbReference type="Gene3D" id="1.20.120.1350">
    <property type="entry name" value="Pneumovirus matrix protein 2 (M2), zinc-binding domain"/>
    <property type="match status" value="1"/>
</dbReference>
<dbReference type="Gene3D" id="4.10.1000.10">
    <property type="entry name" value="Zinc finger, CCCH-type"/>
    <property type="match status" value="1"/>
</dbReference>
<dbReference type="Gene3D" id="3.30.40.10">
    <property type="entry name" value="Zinc/RING finger domain, C3HC4 (zinc finger)"/>
    <property type="match status" value="1"/>
</dbReference>
<dbReference type="InterPro" id="IPR045072">
    <property type="entry name" value="MKRN-like"/>
</dbReference>
<dbReference type="InterPro" id="IPR000571">
    <property type="entry name" value="Znf_CCCH"/>
</dbReference>
<dbReference type="InterPro" id="IPR036855">
    <property type="entry name" value="Znf_CCCH_sf"/>
</dbReference>
<dbReference type="InterPro" id="IPR001841">
    <property type="entry name" value="Znf_RING"/>
</dbReference>
<dbReference type="InterPro" id="IPR013083">
    <property type="entry name" value="Znf_RING/FYVE/PHD"/>
</dbReference>
<dbReference type="InterPro" id="IPR017907">
    <property type="entry name" value="Znf_RING_CS"/>
</dbReference>
<dbReference type="PANTHER" id="PTHR11224:SF17">
    <property type="entry name" value="E3 UBIQUITIN-PROTEIN LIGASE MAKORIN-2"/>
    <property type="match status" value="1"/>
</dbReference>
<dbReference type="PANTHER" id="PTHR11224">
    <property type="entry name" value="MAKORIN-RELATED"/>
    <property type="match status" value="1"/>
</dbReference>
<dbReference type="Pfam" id="PF00642">
    <property type="entry name" value="zf-CCCH"/>
    <property type="match status" value="2"/>
</dbReference>
<dbReference type="Pfam" id="PF14608">
    <property type="entry name" value="zf-CCCH_2"/>
    <property type="match status" value="2"/>
</dbReference>
<dbReference type="SMART" id="SM00184">
    <property type="entry name" value="RING"/>
    <property type="match status" value="1"/>
</dbReference>
<dbReference type="SMART" id="SM00356">
    <property type="entry name" value="ZnF_C3H1"/>
    <property type="match status" value="4"/>
</dbReference>
<dbReference type="SUPFAM" id="SSF90229">
    <property type="entry name" value="CCCH zinc finger"/>
    <property type="match status" value="2"/>
</dbReference>
<dbReference type="SUPFAM" id="SSF57850">
    <property type="entry name" value="RING/U-box"/>
    <property type="match status" value="1"/>
</dbReference>
<dbReference type="PROSITE" id="PS50103">
    <property type="entry name" value="ZF_C3H1"/>
    <property type="match status" value="4"/>
</dbReference>
<dbReference type="PROSITE" id="PS00518">
    <property type="entry name" value="ZF_RING_1"/>
    <property type="match status" value="1"/>
</dbReference>
<dbReference type="PROSITE" id="PS50089">
    <property type="entry name" value="ZF_RING_2"/>
    <property type="match status" value="1"/>
</dbReference>
<protein>
    <recommendedName>
        <fullName evidence="8">E3 ubiquitin-protein ligase makorin-2</fullName>
        <ecNumber evidence="1">2.3.2.27</ecNumber>
    </recommendedName>
    <alternativeName>
        <fullName>RING finger protein 62</fullName>
    </alternativeName>
    <alternativeName>
        <fullName evidence="8">RING-type E3 ubiquitin transferase makorin-2</fullName>
    </alternativeName>
</protein>
<feature type="chain" id="PRO_0000055955" description="E3 ubiquitin-protein ligase makorin-2">
    <location>
        <begin position="1"/>
        <end position="416"/>
    </location>
</feature>
<feature type="zinc finger region" description="C3H1-type 1" evidence="3">
    <location>
        <begin position="2"/>
        <end position="29"/>
    </location>
</feature>
<feature type="zinc finger region" description="C3H1-type 2" evidence="3">
    <location>
        <begin position="31"/>
        <end position="58"/>
    </location>
</feature>
<feature type="zinc finger region" description="C3H1-type 3" evidence="3">
    <location>
        <begin position="165"/>
        <end position="192"/>
    </location>
</feature>
<feature type="zinc finger region" description="RING-type" evidence="2">
    <location>
        <begin position="238"/>
        <end position="292"/>
    </location>
</feature>
<feature type="zinc finger region" description="C3H1-type 4" evidence="3">
    <location>
        <begin position="321"/>
        <end position="350"/>
    </location>
</feature>
<feature type="region of interest" description="Disordered" evidence="4">
    <location>
        <begin position="113"/>
        <end position="142"/>
    </location>
</feature>
<feature type="region of interest" description="Makorin-type Cys-His">
    <location>
        <begin position="193"/>
        <end position="222"/>
    </location>
</feature>
<feature type="compositionally biased region" description="Basic and acidic residues" evidence="4">
    <location>
        <begin position="113"/>
        <end position="122"/>
    </location>
</feature>
<feature type="compositionally biased region" description="Polar residues" evidence="4">
    <location>
        <begin position="123"/>
        <end position="136"/>
    </location>
</feature>
<feature type="modified residue" description="Phosphoserine" evidence="9">
    <location>
        <position position="139"/>
    </location>
</feature>
<feature type="splice variant" id="VSP_055275" description="In isoform 2." evidence="7">
    <location>
        <begin position="8"/>
        <end position="50"/>
    </location>
</feature>
<feature type="sequence variant" id="VAR_052085" description="In dbSNP:rs5746260.">
    <original>R</original>
    <variation>Q</variation>
    <location>
        <position position="388"/>
    </location>
</feature>
<feature type="sequence conflict" description="In Ref. 1; AAG30426/AAG27595." evidence="8" ref="1">
    <original>V</original>
    <variation>F</variation>
    <location>
        <position position="186"/>
    </location>
</feature>
<feature type="sequence conflict" description="In Ref. 2; AAF29042." evidence="8" ref="2">
    <original>K</original>
    <variation>E</variation>
    <location>
        <position position="278"/>
    </location>
</feature>
<sequence>MSTKQITCRYFMHGVCREGSQCLFSHDLANSKPSTICKYYQKGYCAYGTRCRYDHTRPSAAAGGAVGTMAHSVPSPAFHSPHPPSEVTASIVKTNSHEPGKREKRTLVLRDRNLSGMAERKTQPSMVSNPGSCSDPQPSPEMKPHSYLDAIRSGLDDVEASSSYSNEQQLCPYAAAGECRFGDACVYLHGEVCEICRLQVLHPFDPEQRKAHEKICMLTFEHEMEKAFAFQASQDKVCSICMEVILEKASASERRFGILSNCNHTYCLSCIRQWRCAKQFENPIIKSCPECRVISEFVIPSVYWVEDQNKKNELIEAFKQGMGKKACKYFEQGKGTCPFGSKCLYRHAYPDGRLAEPEKPRKQLSSQGTVRFFNSVRLWDFIENRESRHVPNNEDVDMTELGDLFMHLSGVESSEP</sequence>
<organism>
    <name type="scientific">Homo sapiens</name>
    <name type="common">Human</name>
    <dbReference type="NCBI Taxonomy" id="9606"/>
    <lineage>
        <taxon>Eukaryota</taxon>
        <taxon>Metazoa</taxon>
        <taxon>Chordata</taxon>
        <taxon>Craniata</taxon>
        <taxon>Vertebrata</taxon>
        <taxon>Euteleostomi</taxon>
        <taxon>Mammalia</taxon>
        <taxon>Eutheria</taxon>
        <taxon>Euarchontoglires</taxon>
        <taxon>Primates</taxon>
        <taxon>Haplorrhini</taxon>
        <taxon>Catarrhini</taxon>
        <taxon>Hominidae</taxon>
        <taxon>Homo</taxon>
    </lineage>
</organism>
<accession>Q9H000</accession>
<accession>A6NIA2</accession>
<accession>B3KRC5</accession>
<accession>B4DPR4</accession>
<accession>Q8N391</accession>
<accession>Q96BD4</accession>
<accession>Q9BUY2</accession>
<accession>Q9NRY1</accession>
<keyword id="KW-0025">Alternative splicing</keyword>
<keyword id="KW-0963">Cytoplasm</keyword>
<keyword id="KW-0221">Differentiation</keyword>
<keyword id="KW-0479">Metal-binding</keyword>
<keyword id="KW-0539">Nucleus</keyword>
<keyword id="KW-0597">Phosphoprotein</keyword>
<keyword id="KW-1267">Proteomics identification</keyword>
<keyword id="KW-1185">Reference proteome</keyword>
<keyword id="KW-0677">Repeat</keyword>
<keyword id="KW-0744">Spermatogenesis</keyword>
<keyword id="KW-0808">Transferase</keyword>
<keyword id="KW-0833">Ubl conjugation pathway</keyword>
<keyword id="KW-0862">Zinc</keyword>
<keyword id="KW-0863">Zinc-finger</keyword>
<evidence type="ECO:0000250" key="1">
    <source>
        <dbReference type="UniProtKB" id="Q9ERV1"/>
    </source>
</evidence>
<evidence type="ECO:0000255" key="2">
    <source>
        <dbReference type="PROSITE-ProRule" id="PRU00175"/>
    </source>
</evidence>
<evidence type="ECO:0000255" key="3">
    <source>
        <dbReference type="PROSITE-ProRule" id="PRU00723"/>
    </source>
</evidence>
<evidence type="ECO:0000256" key="4">
    <source>
        <dbReference type="SAM" id="MobiDB-lite"/>
    </source>
</evidence>
<evidence type="ECO:0000269" key="5">
    <source>
    </source>
</evidence>
<evidence type="ECO:0000269" key="6">
    <source>
    </source>
</evidence>
<evidence type="ECO:0000303" key="7">
    <source>
    </source>
</evidence>
<evidence type="ECO:0000305" key="8"/>
<evidence type="ECO:0007744" key="9">
    <source>
    </source>
</evidence>
<comment type="function">
    <text evidence="1">E3 ubiquitin ligase catalyzing the covalent attachment of ubiquitin moieties onto substrate proteins (By similarity). Promotes the polyubiquitination and proteasome-dependent degradation of RELA/p65, thereby suppressing RELA-mediated NF-kappaB transactivation and negatively regulating inflammatory responses (By similarity). Plays a role in the regulation of spermiation and in male fertility (By similarity).</text>
</comment>
<comment type="catalytic activity">
    <reaction evidence="1">
        <text>S-ubiquitinyl-[E2 ubiquitin-conjugating enzyme]-L-cysteine + [acceptor protein]-L-lysine = [E2 ubiquitin-conjugating enzyme]-L-cysteine + N(6)-ubiquitinyl-[acceptor protein]-L-lysine.</text>
        <dbReference type="EC" id="2.3.2.27"/>
    </reaction>
</comment>
<comment type="pathway">
    <text>Protein modification; protein ubiquitination.</text>
</comment>
<comment type="subunit">
    <text evidence="1">Interacts with PDLIM2 (via LIM zinc-binding domain) (By similarity). Interacts with RELA (By similarity).</text>
</comment>
<comment type="interaction">
    <interactant intactId="EBI-2341005">
        <id>Q9H000</id>
    </interactant>
    <interactant intactId="EBI-8643161">
        <id>Q9NX04</id>
        <label>AIRIM</label>
    </interactant>
    <organismsDiffer>false</organismsDiffer>
    <experiments>3</experiments>
</comment>
<comment type="interaction">
    <interactant intactId="EBI-2341005">
        <id>Q9H000</id>
    </interactant>
    <interactant intactId="EBI-750300">
        <id>Q01658</id>
        <label>DR1</label>
    </interactant>
    <organismsDiffer>false</organismsDiffer>
    <experiments>3</experiments>
</comment>
<comment type="interaction">
    <interactant intactId="EBI-2341005">
        <id>Q9H000</id>
    </interactant>
    <interactant intactId="EBI-711990">
        <id>O00303</id>
        <label>EIF3F</label>
    </interactant>
    <organismsDiffer>false</organismsDiffer>
    <experiments>3</experiments>
</comment>
<comment type="interaction">
    <interactant intactId="EBI-2341005">
        <id>Q9H000</id>
    </interactant>
    <interactant intactId="EBI-1054873">
        <id>Q9Y5Q9</id>
        <label>GTF3C3</label>
    </interactant>
    <organismsDiffer>false</organismsDiffer>
    <experiments>3</experiments>
</comment>
<comment type="interaction">
    <interactant intactId="EBI-2341005">
        <id>Q9H000</id>
    </interactant>
    <interactant intactId="EBI-466029">
        <id>P42858</id>
        <label>HTT</label>
    </interactant>
    <organismsDiffer>false</organismsDiffer>
    <experiments>12</experiments>
</comment>
<comment type="interaction">
    <interactant intactId="EBI-2341005">
        <id>Q9H000</id>
    </interactant>
    <interactant intactId="EBI-296739">
        <id>P63244</id>
        <label>RACK1</label>
    </interactant>
    <organismsDiffer>false</organismsDiffer>
    <experiments>3</experiments>
</comment>
<comment type="interaction">
    <interactant intactId="EBI-2341005">
        <id>Q9H000</id>
    </interactant>
    <interactant intactId="EBI-372899">
        <id>Q13148</id>
        <label>TARDBP</label>
    </interactant>
    <organismsDiffer>false</organismsDiffer>
    <experiments>6</experiments>
</comment>
<comment type="interaction">
    <interactant intactId="EBI-2341005">
        <id>Q9H000</id>
    </interactant>
    <interactant intactId="EBI-743540">
        <id>P51668</id>
        <label>UBE2D1</label>
    </interactant>
    <organismsDiffer>false</organismsDiffer>
    <experiments>6</experiments>
</comment>
<comment type="interaction">
    <interactant intactId="EBI-2341005">
        <id>Q9H000</id>
    </interactant>
    <interactant intactId="EBI-745527">
        <id>Q9Y2X8</id>
        <label>UBE2D4</label>
    </interactant>
    <organismsDiffer>false</organismsDiffer>
    <experiments>6</experiments>
</comment>
<comment type="interaction">
    <interactant intactId="EBI-2341005">
        <id>Q9H000</id>
    </interactant>
    <interactant intactId="EBI-8456500">
        <id>E9KL35</id>
    </interactant>
    <organismsDiffer>false</organismsDiffer>
    <experiments>3</experiments>
</comment>
<comment type="interaction">
    <interactant intactId="EBI-2341005">
        <id>Q9H000</id>
    </interactant>
    <interactant intactId="EBI-25474079">
        <id>PRO_0000037311</id>
        <label>rep</label>
        <dbReference type="UniProtKB" id="P0C6X7"/>
    </interactant>
    <organismsDiffer>true</organismsDiffer>
    <experiments>2</experiments>
</comment>
<comment type="interaction">
    <interactant intactId="EBI-2341005">
        <id>Q9H000</id>
    </interactant>
    <interactant intactId="EBI-25492388">
        <id>PRO_0000449621</id>
        <label>rep</label>
        <dbReference type="UniProtKB" id="P0DTD1"/>
    </interactant>
    <organismsDiffer>true</organismsDiffer>
    <experiments>4</experiments>
</comment>
<comment type="subcellular location">
    <subcellularLocation>
        <location evidence="1">Cytoplasm</location>
    </subcellularLocation>
    <subcellularLocation>
        <location evidence="1">Nucleus</location>
    </subcellularLocation>
</comment>
<comment type="alternative products">
    <event type="alternative splicing"/>
    <isoform>
        <id>Q9H000-1</id>
        <name>1</name>
        <sequence type="displayed"/>
    </isoform>
    <isoform>
        <id>Q9H000-2</id>
        <name>2</name>
        <sequence type="described" ref="VSP_055275"/>
    </isoform>
</comment>
<comment type="tissue specificity">
    <text evidence="5 6">Expressed in sperm, with significantly reduced expression in sperm of patients with oligoasthenoteratozoospermia (at protein level) (PubMed:28008940). Widely expressed with expression in testis, ovary, small intestine, colon, peripheral blood leukocytes, fetal liver, bone marrow, thymus, lymph node and spleen (PubMed:11597136).</text>
</comment>
<comment type="miscellaneous">
    <text>Partially overlaps and is antisense to the RAF1 proto-oncogene.</text>
</comment>
<reference key="1">
    <citation type="journal article" date="2001" name="Genomics">
        <title>Phylogenetic conservation of the makorin-2 gene, encoding a multiple zinc-finger protein, antisense to the raf1 proto-oncogene.</title>
        <authorList>
            <person name="Gray T.A."/>
            <person name="Azama K."/>
            <person name="Whitmore K."/>
            <person name="Min A."/>
            <person name="Abe S."/>
            <person name="Nicholls R.D."/>
        </authorList>
    </citation>
    <scope>NUCLEOTIDE SEQUENCE [GENOMIC DNA / MRNA] (ISOFORM 1)</scope>
    <scope>TISSUE SPECIFICITY</scope>
</reference>
<reference key="2">
    <citation type="journal article" date="2000" name="Genome Res.">
        <title>Cloning and functional analysis of cDNAs with open reading frames for 300 previously undefined genes expressed in CD34+ hematopoietic stem/progenitor cells.</title>
        <authorList>
            <person name="Zhang Q.-H."/>
            <person name="Ye M."/>
            <person name="Wu X.-Y."/>
            <person name="Ren S.-X."/>
            <person name="Zhao M."/>
            <person name="Zhao C.-J."/>
            <person name="Fu G."/>
            <person name="Shen Y."/>
            <person name="Fan H.-Y."/>
            <person name="Lu G."/>
            <person name="Zhong M."/>
            <person name="Xu X.-R."/>
            <person name="Han Z.-G."/>
            <person name="Zhang J.-W."/>
            <person name="Tao J."/>
            <person name="Huang Q.-H."/>
            <person name="Zhou J."/>
            <person name="Hu G.-X."/>
            <person name="Gu J."/>
            <person name="Chen S.-J."/>
            <person name="Chen Z."/>
        </authorList>
    </citation>
    <scope>NUCLEOTIDE SEQUENCE [LARGE SCALE MRNA] (ISOFORM 1)</scope>
    <source>
        <tissue>Umbilical cord blood</tissue>
    </source>
</reference>
<reference key="3">
    <citation type="journal article" date="2004" name="Nat. Genet.">
        <title>Complete sequencing and characterization of 21,243 full-length human cDNAs.</title>
        <authorList>
            <person name="Ota T."/>
            <person name="Suzuki Y."/>
            <person name="Nishikawa T."/>
            <person name="Otsuki T."/>
            <person name="Sugiyama T."/>
            <person name="Irie R."/>
            <person name="Wakamatsu A."/>
            <person name="Hayashi K."/>
            <person name="Sato H."/>
            <person name="Nagai K."/>
            <person name="Kimura K."/>
            <person name="Makita H."/>
            <person name="Sekine M."/>
            <person name="Obayashi M."/>
            <person name="Nishi T."/>
            <person name="Shibahara T."/>
            <person name="Tanaka T."/>
            <person name="Ishii S."/>
            <person name="Yamamoto J."/>
            <person name="Saito K."/>
            <person name="Kawai Y."/>
            <person name="Isono Y."/>
            <person name="Nakamura Y."/>
            <person name="Nagahari K."/>
            <person name="Murakami K."/>
            <person name="Yasuda T."/>
            <person name="Iwayanagi T."/>
            <person name="Wagatsuma M."/>
            <person name="Shiratori A."/>
            <person name="Sudo H."/>
            <person name="Hosoiri T."/>
            <person name="Kaku Y."/>
            <person name="Kodaira H."/>
            <person name="Kondo H."/>
            <person name="Sugawara M."/>
            <person name="Takahashi M."/>
            <person name="Kanda K."/>
            <person name="Yokoi T."/>
            <person name="Furuya T."/>
            <person name="Kikkawa E."/>
            <person name="Omura Y."/>
            <person name="Abe K."/>
            <person name="Kamihara K."/>
            <person name="Katsuta N."/>
            <person name="Sato K."/>
            <person name="Tanikawa M."/>
            <person name="Yamazaki M."/>
            <person name="Ninomiya K."/>
            <person name="Ishibashi T."/>
            <person name="Yamashita H."/>
            <person name="Murakawa K."/>
            <person name="Fujimori K."/>
            <person name="Tanai H."/>
            <person name="Kimata M."/>
            <person name="Watanabe M."/>
            <person name="Hiraoka S."/>
            <person name="Chiba Y."/>
            <person name="Ishida S."/>
            <person name="Ono Y."/>
            <person name="Takiguchi S."/>
            <person name="Watanabe S."/>
            <person name="Yosida M."/>
            <person name="Hotuta T."/>
            <person name="Kusano J."/>
            <person name="Kanehori K."/>
            <person name="Takahashi-Fujii A."/>
            <person name="Hara H."/>
            <person name="Tanase T.-O."/>
            <person name="Nomura Y."/>
            <person name="Togiya S."/>
            <person name="Komai F."/>
            <person name="Hara R."/>
            <person name="Takeuchi K."/>
            <person name="Arita M."/>
            <person name="Imose N."/>
            <person name="Musashino K."/>
            <person name="Yuuki H."/>
            <person name="Oshima A."/>
            <person name="Sasaki N."/>
            <person name="Aotsuka S."/>
            <person name="Yoshikawa Y."/>
            <person name="Matsunawa H."/>
            <person name="Ichihara T."/>
            <person name="Shiohata N."/>
            <person name="Sano S."/>
            <person name="Moriya S."/>
            <person name="Momiyama H."/>
            <person name="Satoh N."/>
            <person name="Takami S."/>
            <person name="Terashima Y."/>
            <person name="Suzuki O."/>
            <person name="Nakagawa S."/>
            <person name="Senoh A."/>
            <person name="Mizoguchi H."/>
            <person name="Goto Y."/>
            <person name="Shimizu F."/>
            <person name="Wakebe H."/>
            <person name="Hishigaki H."/>
            <person name="Watanabe T."/>
            <person name="Sugiyama A."/>
            <person name="Takemoto M."/>
            <person name="Kawakami B."/>
            <person name="Yamazaki M."/>
            <person name="Watanabe K."/>
            <person name="Kumagai A."/>
            <person name="Itakura S."/>
            <person name="Fukuzumi Y."/>
            <person name="Fujimori Y."/>
            <person name="Komiyama M."/>
            <person name="Tashiro H."/>
            <person name="Tanigami A."/>
            <person name="Fujiwara T."/>
            <person name="Ono T."/>
            <person name="Yamada K."/>
            <person name="Fujii Y."/>
            <person name="Ozaki K."/>
            <person name="Hirao M."/>
            <person name="Ohmori Y."/>
            <person name="Kawabata A."/>
            <person name="Hikiji T."/>
            <person name="Kobatake N."/>
            <person name="Inagaki H."/>
            <person name="Ikema Y."/>
            <person name="Okamoto S."/>
            <person name="Okitani R."/>
            <person name="Kawakami T."/>
            <person name="Noguchi S."/>
            <person name="Itoh T."/>
            <person name="Shigeta K."/>
            <person name="Senba T."/>
            <person name="Matsumura K."/>
            <person name="Nakajima Y."/>
            <person name="Mizuno T."/>
            <person name="Morinaga M."/>
            <person name="Sasaki M."/>
            <person name="Togashi T."/>
            <person name="Oyama M."/>
            <person name="Hata H."/>
            <person name="Watanabe M."/>
            <person name="Komatsu T."/>
            <person name="Mizushima-Sugano J."/>
            <person name="Satoh T."/>
            <person name="Shirai Y."/>
            <person name="Takahashi Y."/>
            <person name="Nakagawa K."/>
            <person name="Okumura K."/>
            <person name="Nagase T."/>
            <person name="Nomura N."/>
            <person name="Kikuchi H."/>
            <person name="Masuho Y."/>
            <person name="Yamashita R."/>
            <person name="Nakai K."/>
            <person name="Yada T."/>
            <person name="Nakamura Y."/>
            <person name="Ohara O."/>
            <person name="Isogai T."/>
            <person name="Sugano S."/>
        </authorList>
    </citation>
    <scope>NUCLEOTIDE SEQUENCE [LARGE SCALE MRNA] (ISOFORMS 1 AND 2)</scope>
    <source>
        <tissue>Brain</tissue>
    </source>
</reference>
<reference key="4">
    <citation type="journal article" date="2006" name="Nature">
        <title>The DNA sequence, annotation and analysis of human chromosome 3.</title>
        <authorList>
            <person name="Muzny D.M."/>
            <person name="Scherer S.E."/>
            <person name="Kaul R."/>
            <person name="Wang J."/>
            <person name="Yu J."/>
            <person name="Sudbrak R."/>
            <person name="Buhay C.J."/>
            <person name="Chen R."/>
            <person name="Cree A."/>
            <person name="Ding Y."/>
            <person name="Dugan-Rocha S."/>
            <person name="Gill R."/>
            <person name="Gunaratne P."/>
            <person name="Harris R.A."/>
            <person name="Hawes A.C."/>
            <person name="Hernandez J."/>
            <person name="Hodgson A.V."/>
            <person name="Hume J."/>
            <person name="Jackson A."/>
            <person name="Khan Z.M."/>
            <person name="Kovar-Smith C."/>
            <person name="Lewis L.R."/>
            <person name="Lozado R.J."/>
            <person name="Metzker M.L."/>
            <person name="Milosavljevic A."/>
            <person name="Miner G.R."/>
            <person name="Morgan M.B."/>
            <person name="Nazareth L.V."/>
            <person name="Scott G."/>
            <person name="Sodergren E."/>
            <person name="Song X.-Z."/>
            <person name="Steffen D."/>
            <person name="Wei S."/>
            <person name="Wheeler D.A."/>
            <person name="Wright M.W."/>
            <person name="Worley K.C."/>
            <person name="Yuan Y."/>
            <person name="Zhang Z."/>
            <person name="Adams C.Q."/>
            <person name="Ansari-Lari M.A."/>
            <person name="Ayele M."/>
            <person name="Brown M.J."/>
            <person name="Chen G."/>
            <person name="Chen Z."/>
            <person name="Clendenning J."/>
            <person name="Clerc-Blankenburg K.P."/>
            <person name="Chen R."/>
            <person name="Chen Z."/>
            <person name="Davis C."/>
            <person name="Delgado O."/>
            <person name="Dinh H.H."/>
            <person name="Dong W."/>
            <person name="Draper H."/>
            <person name="Ernst S."/>
            <person name="Fu G."/>
            <person name="Gonzalez-Garay M.L."/>
            <person name="Garcia D.K."/>
            <person name="Gillett W."/>
            <person name="Gu J."/>
            <person name="Hao B."/>
            <person name="Haugen E."/>
            <person name="Havlak P."/>
            <person name="He X."/>
            <person name="Hennig S."/>
            <person name="Hu S."/>
            <person name="Huang W."/>
            <person name="Jackson L.R."/>
            <person name="Jacob L.S."/>
            <person name="Kelly S.H."/>
            <person name="Kube M."/>
            <person name="Levy R."/>
            <person name="Li Z."/>
            <person name="Liu B."/>
            <person name="Liu J."/>
            <person name="Liu W."/>
            <person name="Lu J."/>
            <person name="Maheshwari M."/>
            <person name="Nguyen B.-V."/>
            <person name="Okwuonu G.O."/>
            <person name="Palmeiri A."/>
            <person name="Pasternak S."/>
            <person name="Perez L.M."/>
            <person name="Phelps K.A."/>
            <person name="Plopper F.J."/>
            <person name="Qiang B."/>
            <person name="Raymond C."/>
            <person name="Rodriguez R."/>
            <person name="Saenphimmachak C."/>
            <person name="Santibanez J."/>
            <person name="Shen H."/>
            <person name="Shen Y."/>
            <person name="Subramanian S."/>
            <person name="Tabor P.E."/>
            <person name="Verduzco D."/>
            <person name="Waldron L."/>
            <person name="Wang J."/>
            <person name="Wang J."/>
            <person name="Wang Q."/>
            <person name="Williams G.A."/>
            <person name="Wong G.K.-S."/>
            <person name="Yao Z."/>
            <person name="Zhang J."/>
            <person name="Zhang X."/>
            <person name="Zhao G."/>
            <person name="Zhou J."/>
            <person name="Zhou Y."/>
            <person name="Nelson D."/>
            <person name="Lehrach H."/>
            <person name="Reinhardt R."/>
            <person name="Naylor S.L."/>
            <person name="Yang H."/>
            <person name="Olson M."/>
            <person name="Weinstock G."/>
            <person name="Gibbs R.A."/>
        </authorList>
    </citation>
    <scope>NUCLEOTIDE SEQUENCE [LARGE SCALE GENOMIC DNA]</scope>
</reference>
<reference key="5">
    <citation type="submission" date="2005-07" db="EMBL/GenBank/DDBJ databases">
        <authorList>
            <person name="Mural R.J."/>
            <person name="Istrail S."/>
            <person name="Sutton G.G."/>
            <person name="Florea L."/>
            <person name="Halpern A.L."/>
            <person name="Mobarry C.M."/>
            <person name="Lippert R."/>
            <person name="Walenz B."/>
            <person name="Shatkay H."/>
            <person name="Dew I."/>
            <person name="Miller J.R."/>
            <person name="Flanigan M.J."/>
            <person name="Edwards N.J."/>
            <person name="Bolanos R."/>
            <person name="Fasulo D."/>
            <person name="Halldorsson B.V."/>
            <person name="Hannenhalli S."/>
            <person name="Turner R."/>
            <person name="Yooseph S."/>
            <person name="Lu F."/>
            <person name="Nusskern D.R."/>
            <person name="Shue B.C."/>
            <person name="Zheng X.H."/>
            <person name="Zhong F."/>
            <person name="Delcher A.L."/>
            <person name="Huson D.H."/>
            <person name="Kravitz S.A."/>
            <person name="Mouchard L."/>
            <person name="Reinert K."/>
            <person name="Remington K.A."/>
            <person name="Clark A.G."/>
            <person name="Waterman M.S."/>
            <person name="Eichler E.E."/>
            <person name="Adams M.D."/>
            <person name="Hunkapiller M.W."/>
            <person name="Myers E.W."/>
            <person name="Venter J.C."/>
        </authorList>
    </citation>
    <scope>NUCLEOTIDE SEQUENCE [LARGE SCALE GENOMIC DNA]</scope>
</reference>
<reference key="6">
    <citation type="journal article" date="2004" name="Genome Res.">
        <title>The status, quality, and expansion of the NIH full-length cDNA project: the Mammalian Gene Collection (MGC).</title>
        <authorList>
            <consortium name="The MGC Project Team"/>
        </authorList>
    </citation>
    <scope>NUCLEOTIDE SEQUENCE [LARGE SCALE MRNA] (ISOFORM 1)</scope>
    <source>
        <tissue>Eye</tissue>
        <tissue>Skin</tissue>
    </source>
</reference>
<reference key="7">
    <citation type="journal article" date="2007" name="BMC Genomics">
        <title>The full-ORF clone resource of the German cDNA consortium.</title>
        <authorList>
            <person name="Bechtel S."/>
            <person name="Rosenfelder H."/>
            <person name="Duda A."/>
            <person name="Schmidt C.P."/>
            <person name="Ernst U."/>
            <person name="Wellenreuther R."/>
            <person name="Mehrle A."/>
            <person name="Schuster C."/>
            <person name="Bahr A."/>
            <person name="Bloecker H."/>
            <person name="Heubner D."/>
            <person name="Hoerlein A."/>
            <person name="Michel G."/>
            <person name="Wedler H."/>
            <person name="Koehrer K."/>
            <person name="Ottenwaelder B."/>
            <person name="Poustka A."/>
            <person name="Wiemann S."/>
            <person name="Schupp I."/>
        </authorList>
    </citation>
    <scope>NUCLEOTIDE SEQUENCE [LARGE SCALE MRNA] OF 115-416 (ISOFORM 1/2)</scope>
    <source>
        <tissue>Melanoma</tissue>
    </source>
</reference>
<reference key="8">
    <citation type="journal article" date="2009" name="Anal. Chem.">
        <title>Lys-N and trypsin cover complementary parts of the phosphoproteome in a refined SCX-based approach.</title>
        <authorList>
            <person name="Gauci S."/>
            <person name="Helbig A.O."/>
            <person name="Slijper M."/>
            <person name="Krijgsveld J."/>
            <person name="Heck A.J."/>
            <person name="Mohammed S."/>
        </authorList>
    </citation>
    <scope>IDENTIFICATION BY MASS SPECTROMETRY [LARGE SCALE ANALYSIS]</scope>
</reference>
<reference key="9">
    <citation type="journal article" date="2014" name="J. Proteomics">
        <title>An enzyme assisted RP-RPLC approach for in-depth analysis of human liver phosphoproteome.</title>
        <authorList>
            <person name="Bian Y."/>
            <person name="Song C."/>
            <person name="Cheng K."/>
            <person name="Dong M."/>
            <person name="Wang F."/>
            <person name="Huang J."/>
            <person name="Sun D."/>
            <person name="Wang L."/>
            <person name="Ye M."/>
            <person name="Zou H."/>
        </authorList>
    </citation>
    <scope>PHOSPHORYLATION [LARGE SCALE ANALYSIS] AT SER-139</scope>
    <scope>IDENTIFICATION BY MASS SPECTROMETRY [LARGE SCALE ANALYSIS]</scope>
    <source>
        <tissue>Liver</tissue>
    </source>
</reference>
<reference key="10">
    <citation type="journal article" date="2016" name="Sci. Rep.">
        <title>Deficiency of Mkrn2 causes abnormal spermiogenesis and spermiation, and impairs male fertility.</title>
        <authorList>
            <person name="Qian X."/>
            <person name="Wang L."/>
            <person name="Zheng B."/>
            <person name="Shi Z.M."/>
            <person name="Ge X."/>
            <person name="Jiang C.F."/>
            <person name="Qian Y.C."/>
            <person name="Li D.M."/>
            <person name="Li W."/>
            <person name="Liu X."/>
            <person name="Yin Y."/>
            <person name="Zheng J.T."/>
            <person name="Shen H."/>
            <person name="Wang M."/>
            <person name="Guo X.J."/>
            <person name="He J."/>
            <person name="Lin M."/>
            <person name="Liu L.Z."/>
            <person name="Sha J.H."/>
            <person name="Jiang B.H."/>
        </authorList>
    </citation>
    <scope>TISSUE SPECIFICITY</scope>
</reference>
<gene>
    <name type="primary">MKRN2</name>
    <name type="synonym">RNF62</name>
    <name type="ORF">HSPC070</name>
</gene>
<name>MKRN2_HUMAN</name>
<proteinExistence type="evidence at protein level"/>